<keyword id="KW-0131">Cell cycle</keyword>
<keyword id="KW-0132">Cell division</keyword>
<keyword id="KW-0378">Hydrolase</keyword>
<keyword id="KW-0498">Mitosis</keyword>
<keyword id="KW-0904">Protein phosphatase</keyword>
<keyword id="KW-1185">Reference proteome</keyword>
<sequence length="480" mass="55737">MNRPSQISQDVAQPLSNQHETAMMSSDEDSMSRDSGICELMDENTPVCFSSMSTESTTVQVEECMEIDEDENLQPGPVSRRQKKVTFRREKSSCQVRLFDESPTSHKMFMRPQAPLSVRSENQQLLQQRKRKFEKSEQSSDHFHLEPMSVEAMDDDEIVMMDQNTTKWEPGFRAPNHKKGRLTRSATAFPSLETFEEEEHEEQHHLNVKYHLKTVAKESSKGFRRITAETLRDIFFRLSEKEFDDKYILIDCRYPYEYNRGHIKNAINHFDRVTVSKIFYDENGRKRCNKIPIFYCEFSQARGPKMAYALRQVDRELNVNHYPKCDYEEMYVLDLGYRNFFFAANEANITNLCQPHAYCEMHDKEHTMELKKYNFHNKGQSVLRTVSMSRSFKSLPTGSAFNFVASSASFTSAPSTSTENIDTNDDCQKSRTPAVPRIASRRNLFSDPSHSPTNFAQFPLTCSRETPSPHKHPLTCPRFS</sequence>
<dbReference type="EC" id="3.1.3.48"/>
<dbReference type="EMBL" id="FO081161">
    <property type="protein sequence ID" value="CCD69573.1"/>
    <property type="molecule type" value="Genomic_DNA"/>
</dbReference>
<dbReference type="PIR" id="B88953">
    <property type="entry name" value="B88953"/>
</dbReference>
<dbReference type="PIR" id="T32663">
    <property type="entry name" value="T32663"/>
</dbReference>
<dbReference type="PIR" id="T32665">
    <property type="entry name" value="T32665"/>
</dbReference>
<dbReference type="RefSeq" id="NP_503446.1">
    <property type="nucleotide sequence ID" value="NM_071045.6"/>
</dbReference>
<dbReference type="SMR" id="O44628"/>
<dbReference type="BioGRID" id="43712">
    <property type="interactions" value="2"/>
</dbReference>
<dbReference type="FunCoup" id="O44628">
    <property type="interactions" value="156"/>
</dbReference>
<dbReference type="STRING" id="6239.F16B4.8a.1"/>
<dbReference type="PaxDb" id="6239-F16B4.8"/>
<dbReference type="EnsemblMetazoa" id="F16B4.8a.1">
    <property type="protein sequence ID" value="F16B4.8a.1"/>
    <property type="gene ID" value="WBGene00000387"/>
</dbReference>
<dbReference type="GeneID" id="178645"/>
<dbReference type="KEGG" id="cel:CELE_F16B4.8"/>
<dbReference type="UCSC" id="F16B4.8">
    <property type="organism name" value="c. elegans"/>
</dbReference>
<dbReference type="AGR" id="WB:WBGene00000387"/>
<dbReference type="CTD" id="178645"/>
<dbReference type="WormBase" id="F16B4.8a">
    <property type="protein sequence ID" value="CE19796"/>
    <property type="gene ID" value="WBGene00000387"/>
    <property type="gene designation" value="cdc-25.2"/>
</dbReference>
<dbReference type="eggNOG" id="KOG3772">
    <property type="taxonomic scope" value="Eukaryota"/>
</dbReference>
<dbReference type="GeneTree" id="ENSGT00970000196560"/>
<dbReference type="HOGENOM" id="CLU_548886_0_0_1"/>
<dbReference type="InParanoid" id="O44628"/>
<dbReference type="OMA" id="RYPFEYE"/>
<dbReference type="OrthoDB" id="26523at2759"/>
<dbReference type="PhylomeDB" id="O44628"/>
<dbReference type="Reactome" id="R-CEL-156711">
    <property type="pathway name" value="Polo-like kinase mediated events"/>
</dbReference>
<dbReference type="Reactome" id="R-CEL-176187">
    <property type="pathway name" value="Activation of ATR in response to replication stress"/>
</dbReference>
<dbReference type="Reactome" id="R-CEL-5625740">
    <property type="pathway name" value="RHO GTPases activate PKNs"/>
</dbReference>
<dbReference type="Reactome" id="R-CEL-5689880">
    <property type="pathway name" value="Ub-specific processing proteases"/>
</dbReference>
<dbReference type="Reactome" id="R-CEL-69202">
    <property type="pathway name" value="Cyclin E associated events during G1/S transition"/>
</dbReference>
<dbReference type="Reactome" id="R-CEL-69273">
    <property type="pathway name" value="Cyclin A/B1/B2 associated events during G2/M transition"/>
</dbReference>
<dbReference type="Reactome" id="R-CEL-69601">
    <property type="pathway name" value="Ubiquitin Mediated Degradation of Phosphorylated Cdc25A"/>
</dbReference>
<dbReference type="Reactome" id="R-CEL-69656">
    <property type="pathway name" value="Cyclin A:Cdk2-associated events at S phase entry"/>
</dbReference>
<dbReference type="Reactome" id="R-CEL-75035">
    <property type="pathway name" value="Chk1/Chk2(Cds1) mediated inactivation of Cyclin B:Cdk1 complex"/>
</dbReference>
<dbReference type="PRO" id="PR:O44628"/>
<dbReference type="Proteomes" id="UP000001940">
    <property type="component" value="Chromosome V"/>
</dbReference>
<dbReference type="Bgee" id="WBGene00000387">
    <property type="expression patterns" value="Expressed in embryo and 6 other cell types or tissues"/>
</dbReference>
<dbReference type="ExpressionAtlas" id="O44628">
    <property type="expression patterns" value="baseline and differential"/>
</dbReference>
<dbReference type="GO" id="GO:0005737">
    <property type="term" value="C:cytoplasm"/>
    <property type="evidence" value="ECO:0000318"/>
    <property type="project" value="GO_Central"/>
</dbReference>
<dbReference type="GO" id="GO:0005634">
    <property type="term" value="C:nucleus"/>
    <property type="evidence" value="ECO:0000318"/>
    <property type="project" value="GO_Central"/>
</dbReference>
<dbReference type="GO" id="GO:0004725">
    <property type="term" value="F:protein tyrosine phosphatase activity"/>
    <property type="evidence" value="ECO:0000318"/>
    <property type="project" value="GO_Central"/>
</dbReference>
<dbReference type="GO" id="GO:0010481">
    <property type="term" value="P:epidermal cell division"/>
    <property type="evidence" value="ECO:0000315"/>
    <property type="project" value="UniProtKB"/>
</dbReference>
<dbReference type="GO" id="GO:0000086">
    <property type="term" value="P:G2/M transition of mitotic cell cycle"/>
    <property type="evidence" value="ECO:0000318"/>
    <property type="project" value="GO_Central"/>
</dbReference>
<dbReference type="GO" id="GO:0045138">
    <property type="term" value="P:nematode male tail tip morphogenesis"/>
    <property type="evidence" value="ECO:0000315"/>
    <property type="project" value="UniProtKB"/>
</dbReference>
<dbReference type="GO" id="GO:0010971">
    <property type="term" value="P:positive regulation of G2/M transition of mitotic cell cycle"/>
    <property type="evidence" value="ECO:0000318"/>
    <property type="project" value="GO_Central"/>
</dbReference>
<dbReference type="GO" id="GO:0110032">
    <property type="term" value="P:positive regulation of G2/MI transition of meiotic cell cycle"/>
    <property type="evidence" value="ECO:0000318"/>
    <property type="project" value="GO_Central"/>
</dbReference>
<dbReference type="CDD" id="cd01530">
    <property type="entry name" value="Cdc25"/>
    <property type="match status" value="1"/>
</dbReference>
<dbReference type="FunFam" id="3.40.250.10:FF:000021">
    <property type="entry name" value="M-phase inducer phosphatase cdc-25.2"/>
    <property type="match status" value="1"/>
</dbReference>
<dbReference type="Gene3D" id="3.40.250.10">
    <property type="entry name" value="Rhodanese-like domain"/>
    <property type="match status" value="1"/>
</dbReference>
<dbReference type="InterPro" id="IPR000751">
    <property type="entry name" value="MPI_Phosphatase"/>
</dbReference>
<dbReference type="InterPro" id="IPR001763">
    <property type="entry name" value="Rhodanese-like_dom"/>
</dbReference>
<dbReference type="InterPro" id="IPR036873">
    <property type="entry name" value="Rhodanese-like_dom_sf"/>
</dbReference>
<dbReference type="PANTHER" id="PTHR10828:SF76">
    <property type="entry name" value="M-PHASE INDUCER PHOSPHATASE"/>
    <property type="match status" value="1"/>
</dbReference>
<dbReference type="PANTHER" id="PTHR10828">
    <property type="entry name" value="M-PHASE INDUCER PHOSPHATASE DUAL SPECIFICITY PHOSPHATASE CDC25"/>
    <property type="match status" value="1"/>
</dbReference>
<dbReference type="Pfam" id="PF00581">
    <property type="entry name" value="Rhodanese"/>
    <property type="match status" value="1"/>
</dbReference>
<dbReference type="PRINTS" id="PR00716">
    <property type="entry name" value="MPIPHPHTASE"/>
</dbReference>
<dbReference type="SMART" id="SM00450">
    <property type="entry name" value="RHOD"/>
    <property type="match status" value="1"/>
</dbReference>
<dbReference type="SUPFAM" id="SSF52821">
    <property type="entry name" value="Rhodanese/Cell cycle control phosphatase"/>
    <property type="match status" value="1"/>
</dbReference>
<dbReference type="PROSITE" id="PS50206">
    <property type="entry name" value="RHODANESE_3"/>
    <property type="match status" value="1"/>
</dbReference>
<feature type="chain" id="PRO_0000198656" description="M-phase inducer phosphatase cdc-25.2">
    <location>
        <begin position="1"/>
        <end position="480"/>
    </location>
</feature>
<feature type="domain" description="Rhodanese" evidence="1">
    <location>
        <begin position="243"/>
        <end position="349"/>
    </location>
</feature>
<feature type="region of interest" description="Disordered" evidence="2">
    <location>
        <begin position="1"/>
        <end position="35"/>
    </location>
</feature>
<feature type="region of interest" description="Disordered" evidence="2">
    <location>
        <begin position="411"/>
        <end position="452"/>
    </location>
</feature>
<feature type="compositionally biased region" description="Polar residues" evidence="2">
    <location>
        <begin position="1"/>
        <end position="20"/>
    </location>
</feature>
<feature type="mutagenesis site" description="In av40; Causes abnormal male tail morphology when cultured at 25 degrees Celsius at the larval L2 stage." evidence="4">
    <original>S</original>
    <variation>F</variation>
    <location>
        <position position="239"/>
    </location>
</feature>
<gene>
    <name evidence="6" type="primary">cdc-25.2</name>
    <name evidence="6" type="ORF">F16B4.8</name>
</gene>
<name>MPIP2_CAEEL</name>
<protein>
    <recommendedName>
        <fullName>M-phase inducer phosphatase cdc-25.2</fullName>
        <ecNumber>3.1.3.48</ecNumber>
    </recommendedName>
    <alternativeName>
        <fullName>Cell division cycle-related protein 25.2</fullName>
    </alternativeName>
</protein>
<evidence type="ECO:0000255" key="1">
    <source>
        <dbReference type="PROSITE-ProRule" id="PRU00173"/>
    </source>
</evidence>
<evidence type="ECO:0000256" key="2">
    <source>
        <dbReference type="SAM" id="MobiDB-lite"/>
    </source>
</evidence>
<evidence type="ECO:0000269" key="3">
    <source>
    </source>
</evidence>
<evidence type="ECO:0000269" key="4">
    <source>
    </source>
</evidence>
<evidence type="ECO:0000305" key="5"/>
<evidence type="ECO:0000312" key="6">
    <source>
        <dbReference type="WormBase" id="F16B4.8a"/>
    </source>
</evidence>
<proteinExistence type="evidence at protein level"/>
<comment type="function">
    <text evidence="3 4">Required for intestinal cell division following the 16E cell stage of embryogenesis (PubMed:27104746). Regulates intestinal cell divisions and binucleations probably by modulating the activity of the cell cycle regulator wee-1.3 and by activating the cdk-1/cyb-1 complex (PubMed:27104746). Plays a role in male tail development, via regulation of the cell divisions of the ray precursor cell lineages, perhaps acting together with cell cycle regulators cyl-1, cdk-1, cyb-3, and cyd-1 (PubMed:27923661).</text>
</comment>
<comment type="catalytic activity">
    <reaction>
        <text>O-phospho-L-tyrosyl-[protein] + H2O = L-tyrosyl-[protein] + phosphate</text>
        <dbReference type="Rhea" id="RHEA:10684"/>
        <dbReference type="Rhea" id="RHEA-COMP:10136"/>
        <dbReference type="Rhea" id="RHEA-COMP:20101"/>
        <dbReference type="ChEBI" id="CHEBI:15377"/>
        <dbReference type="ChEBI" id="CHEBI:43474"/>
        <dbReference type="ChEBI" id="CHEBI:46858"/>
        <dbReference type="ChEBI" id="CHEBI:61978"/>
        <dbReference type="EC" id="3.1.3.48"/>
    </reaction>
</comment>
<comment type="developmental stage">
    <text evidence="3 4">Transiently expressed in the intestine during larval development (PubMed:27104746). Expressed in the intestine in L1 stage larvae, not expressed in L2 to L3 stage larvae, but is then again expressed in the gonad of L4 stage larvae (PubMed:27104746). Expressed in seam cells during larval development (PubMed:27923661). Broadly expressed throughout development in multiple male somatic tissues, including pharynx, ventral nerve cord, body muscles, diagonal muscles, and hypodermis (PubMed:27923661).</text>
</comment>
<comment type="disruption phenotype">
    <text evidence="3 4">Viable, but 85% of animals are sterile at 20 degrees Celsius (PubMed:27104746). Reduced number of intestinal cells in 1.5-fold stage embryos due to defective intestinal divisions and binuleations at the 16E cell stage of embryonic development (PubMed:27104746). Knockout with wee-1.3 RNAi suppresses the defect in intestinal cell divisions in the cdc-25.2 single mutant (PubMed:27104746). RNAi-mediated knockdown causes abnormal male tail morphology; this phenotype is suppressed by simultaneous RNAi-mediated knockdown of wee-1.3 (PubMed:27923661).</text>
</comment>
<comment type="similarity">
    <text evidence="5">Belongs to the MPI phosphatase family.</text>
</comment>
<organism>
    <name type="scientific">Caenorhabditis elegans</name>
    <dbReference type="NCBI Taxonomy" id="6239"/>
    <lineage>
        <taxon>Eukaryota</taxon>
        <taxon>Metazoa</taxon>
        <taxon>Ecdysozoa</taxon>
        <taxon>Nematoda</taxon>
        <taxon>Chromadorea</taxon>
        <taxon>Rhabditida</taxon>
        <taxon>Rhabditina</taxon>
        <taxon>Rhabditomorpha</taxon>
        <taxon>Rhabditoidea</taxon>
        <taxon>Rhabditidae</taxon>
        <taxon>Peloderinae</taxon>
        <taxon>Caenorhabditis</taxon>
    </lineage>
</organism>
<accession>O44628</accession>
<reference key="1">
    <citation type="journal article" date="1998" name="Science">
        <title>Genome sequence of the nematode C. elegans: a platform for investigating biology.</title>
        <authorList>
            <consortium name="The C. elegans sequencing consortium"/>
        </authorList>
    </citation>
    <scope>NUCLEOTIDE SEQUENCE [LARGE SCALE GENOMIC DNA]</scope>
    <source>
        <strain>Bristol N2</strain>
    </source>
</reference>
<reference key="2">
    <citation type="journal article" date="1998" name="Gene">
        <title>The four cdc25 genes from the nematode Caenorhabditis elegans.</title>
        <authorList>
            <person name="Ashcroft N.R."/>
            <person name="Kosinski M.E."/>
            <person name="Wickramasinghe D."/>
            <person name="Donovan P.J."/>
            <person name="Golden A."/>
        </authorList>
    </citation>
    <scope>IDENTIFICATION</scope>
</reference>
<reference key="3">
    <citation type="journal article" date="2016" name="Cell Cycle">
        <title>CDC-25.2, a C. elegans ortholog of cdc25, is essential for the progression of intestinal divisions.</title>
        <authorList>
            <person name="Lee Y.U."/>
            <person name="Son M."/>
            <person name="Kim J."/>
            <person name="Shim Y.H."/>
            <person name="Kawasaki I."/>
        </authorList>
    </citation>
    <scope>FUNCTION</scope>
    <scope>DEVELOPMENTAL STAGE</scope>
    <scope>DISRUPTION PHENOTYPE</scope>
</reference>
<reference key="4">
    <citation type="journal article" date="2017" name="Biochem. Biophys. Res. Commun.">
        <title>cdc-25.2, a Caenorhabditis elegans ortholog of cdc25, is required for male tail morphogenesis.</title>
        <authorList>
            <person name="Oh S."/>
            <person name="Yoon S."/>
            <person name="Youn E."/>
            <person name="Kawasaki I."/>
            <person name="Shim Y.H."/>
        </authorList>
    </citation>
    <scope>FUNCTION</scope>
    <scope>DEVELOPMENTAL STAGE</scope>
    <scope>DISRUPTION PHENOTYPE</scope>
    <scope>MUTAGENESIS OF SER-239</scope>
</reference>